<name>NT11_LEIDO</name>
<sequence length="491" mass="53962">MDTAPDHREPQEQGESRKWYEMTASEFYVYVVAFMCGVSMMMPVNAVFSAPAYIMTYYRYAMQDPEAVPLYTNFWNNVMTYYNLIGIVTSLIMEPLTLLSWFRRIPMKVRLLGGLVILIVEIIVLMVVPARGTSEAGAVATICCTGFIGGFGKSIFESTTYGMFGAFPSSFTSTMMGGVGMSGVLTSLLQIIVKAALPDSYEGVKKQSKIYYGLDVGIQGMTFVALILLRFNSFAQNYFGDLGAVKSKVDAGKLSAEALCHTDEHPTHDKEGRNSSSGKEVPALGEVQTAAAKSEGPDAVEESSWPHEVEGPTSNEILVATAIFSTLRRVKWMFVACAFNFLITLFLFPGIAVGMFPDSKWFSTIAVFIFNVFDVLGRFSPSLKLMWPRSYKQRWIIVAASFARVIFVPLLLLHSYHYIPGEAYGYVMEVIFGFSNGYVGSMALVLGPQSKGIDNDGKRFVAGTLMGISILVGGTIGTVLSIMTQTIRATY</sequence>
<comment type="function">
    <text evidence="4 5">Sodium-independent high affinity nucleoside:H(+) symporter; transports adenosine and uridine (PubMed:12835315, PubMed:9707568). Can transport cytidine and thymidine (PubMed:12835315).</text>
</comment>
<comment type="catalytic activity">
    <reaction evidence="4 5">
        <text>adenosine(in) + H(+)(in) = adenosine(out) + H(+)(out)</text>
        <dbReference type="Rhea" id="RHEA:29987"/>
        <dbReference type="ChEBI" id="CHEBI:15378"/>
        <dbReference type="ChEBI" id="CHEBI:16335"/>
    </reaction>
</comment>
<comment type="catalytic activity">
    <reaction evidence="4 5">
        <text>uridine(in) + H(+)(in) = uridine(out) + H(+)(out)</text>
        <dbReference type="Rhea" id="RHEA:29951"/>
        <dbReference type="ChEBI" id="CHEBI:15378"/>
        <dbReference type="ChEBI" id="CHEBI:16704"/>
    </reaction>
</comment>
<comment type="biophysicochemical properties">
    <kinetics>
        <KM evidence="5">0.17 uM for adenosine</KM>
        <KM evidence="5">5.6 uM for uridine</KM>
    </kinetics>
</comment>
<comment type="subcellular location">
    <subcellularLocation>
        <location evidence="1">Membrane</location>
        <topology evidence="1">Multi-pass membrane protein</topology>
    </subcellularLocation>
</comment>
<comment type="miscellaneous">
    <text evidence="5">Can transport tubercidin, a toxic adenosine analog.</text>
</comment>
<comment type="similarity">
    <text evidence="8">Belongs to the SLC29A/ENT transporter (TC 2.A.57) family.</text>
</comment>
<feature type="chain" id="PRO_0000462030" description="Nucleoside transporter 1.1">
    <location>
        <begin position="1"/>
        <end position="491"/>
    </location>
</feature>
<feature type="transmembrane region" description="Helical" evidence="1">
    <location>
        <begin position="27"/>
        <end position="47"/>
    </location>
</feature>
<feature type="transmembrane region" description="Helical" evidence="1">
    <location>
        <begin position="82"/>
        <end position="102"/>
    </location>
</feature>
<feature type="transmembrane region" description="Helical" evidence="1">
    <location>
        <begin position="109"/>
        <end position="129"/>
    </location>
</feature>
<feature type="transmembrane region" description="Helical" evidence="1">
    <location>
        <begin position="136"/>
        <end position="156"/>
    </location>
</feature>
<feature type="transmembrane region" description="Helical" evidence="1">
    <location>
        <begin position="173"/>
        <end position="193"/>
    </location>
</feature>
<feature type="transmembrane region" description="Helical" evidence="1">
    <location>
        <begin position="209"/>
        <end position="229"/>
    </location>
</feature>
<feature type="transmembrane region" description="Helical" evidence="1">
    <location>
        <begin position="333"/>
        <end position="353"/>
    </location>
</feature>
<feature type="transmembrane region" description="Helical" evidence="1">
    <location>
        <begin position="361"/>
        <end position="381"/>
    </location>
</feature>
<feature type="transmembrane region" description="Helical" evidence="1">
    <location>
        <begin position="395"/>
        <end position="415"/>
    </location>
</feature>
<feature type="transmembrane region" description="Helical" evidence="1">
    <location>
        <begin position="427"/>
        <end position="447"/>
    </location>
</feature>
<feature type="transmembrane region" description="Helical" evidence="1">
    <location>
        <begin position="460"/>
        <end position="480"/>
    </location>
</feature>
<feature type="region of interest" description="Disordered" evidence="3">
    <location>
        <begin position="260"/>
        <end position="280"/>
    </location>
</feature>
<feature type="region of interest" description="Disordered" evidence="3">
    <location>
        <begin position="290"/>
        <end position="309"/>
    </location>
</feature>
<feature type="compositionally biased region" description="Basic and acidic residues" evidence="3">
    <location>
        <begin position="260"/>
        <end position="273"/>
    </location>
</feature>
<feature type="glycosylation site" description="N-linked (GlcNAc...) asparagine" evidence="2">
    <location>
        <position position="274"/>
    </location>
</feature>
<gene>
    <name evidence="7" type="primary">NT1.1</name>
    <name evidence="12" type="ORF">CGC20_30430</name>
    <name evidence="10" type="ORF">LdCL_150017900</name>
    <name evidence="11" type="ORF">LDHU3_15.1550</name>
</gene>
<protein>
    <recommendedName>
        <fullName evidence="7">Nucleoside transporter 1.1</fullName>
        <shortName evidence="7">LdNT1.1</shortName>
    </recommendedName>
    <alternativeName>
        <fullName evidence="6">Equilibrative nucleoside transporter 1.1</fullName>
    </alternativeName>
</protein>
<organism evidence="9">
    <name type="scientific">Leishmania donovani</name>
    <dbReference type="NCBI Taxonomy" id="5661"/>
    <lineage>
        <taxon>Eukaryota</taxon>
        <taxon>Discoba</taxon>
        <taxon>Euglenozoa</taxon>
        <taxon>Kinetoplastea</taxon>
        <taxon>Metakinetoplastina</taxon>
        <taxon>Trypanosomatida</taxon>
        <taxon>Trypanosomatidae</taxon>
        <taxon>Leishmaniinae</taxon>
        <taxon>Leishmania</taxon>
    </lineage>
</organism>
<reference evidence="9" key="1">
    <citation type="journal article" date="1998" name="Proc. Natl. Acad. Sci. U.S.A.">
        <title>Cloning of Leishmania nucleoside transporter genes by rescue of a transport-deficient mutant.</title>
        <authorList>
            <person name="Vasudevan G."/>
            <person name="Carter N.S."/>
            <person name="Drew M.E."/>
            <person name="Beverley S.M."/>
            <person name="Sanchez M.A."/>
            <person name="Seyfang A."/>
            <person name="Ullman B."/>
            <person name="Landfear S.M."/>
        </authorList>
    </citation>
    <scope>NUCLEOTIDE SEQUENCE [GENOMIC DNA]</scope>
    <scope>FUNCTION</scope>
    <scope>TRANSPORTER ACTIVITY</scope>
    <scope>BIOPHYSICOCHEMICAL PROPERTIES</scope>
    <source>
        <strain evidence="9">1S</strain>
    </source>
</reference>
<reference evidence="13" key="2">
    <citation type="journal article" date="2018" name="Sci. Rep.">
        <title>A complete Leishmania donovani reference genome identifies novel genetic variations associated with virulence.</title>
        <authorList>
            <person name="Lypaczewski P."/>
            <person name="Hoshizaki J."/>
            <person name="Zhang W.-W."/>
            <person name="McCall L.-I."/>
            <person name="Torcivia-Rodriguez J."/>
            <person name="Simonyan V."/>
            <person name="Kaur A."/>
            <person name="Dewar K."/>
            <person name="Matlashewski G."/>
        </authorList>
    </citation>
    <scope>NUCLEOTIDE SEQUENCE [LARGE SCALE GENOMIC DNA]</scope>
    <source>
        <strain evidence="13">LdCL</strain>
    </source>
</reference>
<reference evidence="14" key="3">
    <citation type="submission" date="2019-02" db="EMBL/GenBank/DDBJ databases">
        <title>FDA dAtabase for Regulatory Grade micrObial Sequences (FDA-ARGOS): Supporting development and validation of Infectious Disease Dx tests.</title>
        <authorList>
            <person name="Duncan R."/>
            <person name="Fisher C."/>
            <person name="Tallon L."/>
            <person name="Sadzewicz L."/>
            <person name="Sengamalay N."/>
            <person name="Ott S."/>
            <person name="Godinez A."/>
            <person name="Nagaraj S."/>
            <person name="Vavikolanu K."/>
            <person name="Vyas G."/>
            <person name="Nadendla S."/>
            <person name="Aluvathingal J."/>
            <person name="Sichtig H."/>
        </authorList>
    </citation>
    <scope>NUCLEOTIDE SEQUENCE [LARGE SCALE GENOMIC DNA]</scope>
    <source>
        <strain evidence="14">FDAARGOS_360</strain>
    </source>
</reference>
<reference evidence="11" key="4">
    <citation type="submission" date="2020-06" db="EMBL/GenBank/DDBJ databases">
        <authorList>
            <person name="Camacho E."/>
            <person name="Gonzalez-de la Fuente S."/>
            <person name="Rastrojo A."/>
            <person name="Peiro-Pastor R."/>
            <person name="Solana J.C."/>
            <person name="Tabera L."/>
            <person name="Gamarro F."/>
            <person name="Carrasco-Ramiro F."/>
            <person name="Requena J.M."/>
            <person name="Aguado B."/>
        </authorList>
    </citation>
    <scope>NUCLEOTIDE SEQUENCE [LARGE SCALE GENOMIC DNA]</scope>
</reference>
<reference evidence="8" key="5">
    <citation type="journal article" date="2003" name="J. Biol. Chem.">
        <title>Equilibrative nucleoside transporter family members from Leishmania donovani are electrogenic proton symporters.</title>
        <authorList>
            <person name="Stein A."/>
            <person name="Vaseduvan G."/>
            <person name="Carter N.S."/>
            <person name="Ullman B."/>
            <person name="Landfear S.M."/>
            <person name="Kavanaugh M.P."/>
        </authorList>
    </citation>
    <scope>FUNCTION</scope>
    <scope>TRANSPORTER ACTIVITY</scope>
</reference>
<dbReference type="EMBL" id="AF065311">
    <property type="protein sequence ID" value="AAC32597.1"/>
    <property type="molecule type" value="Genomic_DNA"/>
</dbReference>
<dbReference type="EMBL" id="CP029514">
    <property type="protein sequence ID" value="AYU77538.1"/>
    <property type="molecule type" value="Genomic_DNA"/>
</dbReference>
<dbReference type="EMBL" id="LR812635">
    <property type="protein sequence ID" value="CAC5428821.1"/>
    <property type="molecule type" value="Genomic_DNA"/>
</dbReference>
<dbReference type="EMBL" id="RHLD01000037">
    <property type="protein sequence ID" value="TPP53190.1"/>
    <property type="molecule type" value="Genomic_DNA"/>
</dbReference>
<dbReference type="TCDB" id="2.A.57.2.1">
    <property type="family name" value="the equilibrative nucleoside transporter (ent) family"/>
</dbReference>
<dbReference type="VEuPathDB" id="TriTrypDB:LdBPK_151230.1"/>
<dbReference type="VEuPathDB" id="TriTrypDB:LdCL_150017900"/>
<dbReference type="VEuPathDB" id="TriTrypDB:LDHU3_15.1550"/>
<dbReference type="Proteomes" id="UP000274082">
    <property type="component" value="Chromosome ldcl_15"/>
</dbReference>
<dbReference type="Proteomes" id="UP000318821">
    <property type="component" value="Unassembled WGS sequence"/>
</dbReference>
<dbReference type="Proteomes" id="UP000601710">
    <property type="component" value="Chromosome 15"/>
</dbReference>
<dbReference type="GO" id="GO:0005886">
    <property type="term" value="C:plasma membrane"/>
    <property type="evidence" value="ECO:0007669"/>
    <property type="project" value="TreeGrafter"/>
</dbReference>
<dbReference type="GO" id="GO:0005337">
    <property type="term" value="F:nucleoside transmembrane transporter activity"/>
    <property type="evidence" value="ECO:0007669"/>
    <property type="project" value="InterPro"/>
</dbReference>
<dbReference type="InterPro" id="IPR034764">
    <property type="entry name" value="ENT1/ENT2"/>
</dbReference>
<dbReference type="InterPro" id="IPR002259">
    <property type="entry name" value="Eqnu_transpt"/>
</dbReference>
<dbReference type="NCBIfam" id="TIGR00939">
    <property type="entry name" value="2a57"/>
    <property type="match status" value="1"/>
</dbReference>
<dbReference type="PANTHER" id="PTHR10332">
    <property type="entry name" value="EQUILIBRATIVE NUCLEOSIDE TRANSPORTER"/>
    <property type="match status" value="1"/>
</dbReference>
<dbReference type="PANTHER" id="PTHR10332:SF10">
    <property type="entry name" value="EQUILIBRATIVE NUCLEOSIDE TRANSPORTER 4"/>
    <property type="match status" value="1"/>
</dbReference>
<dbReference type="Pfam" id="PF01733">
    <property type="entry name" value="Nucleoside_tran"/>
    <property type="match status" value="1"/>
</dbReference>
<dbReference type="PRINTS" id="PR01130">
    <property type="entry name" value="DERENTRNSPRT"/>
</dbReference>
<evidence type="ECO:0000255" key="1"/>
<evidence type="ECO:0000255" key="2">
    <source>
        <dbReference type="PROSITE-ProRule" id="PRU00498"/>
    </source>
</evidence>
<evidence type="ECO:0000256" key="3">
    <source>
        <dbReference type="SAM" id="MobiDB-lite"/>
    </source>
</evidence>
<evidence type="ECO:0000269" key="4">
    <source>
    </source>
</evidence>
<evidence type="ECO:0000269" key="5">
    <source>
    </source>
</evidence>
<evidence type="ECO:0000303" key="6">
    <source>
    </source>
</evidence>
<evidence type="ECO:0000303" key="7">
    <source>
    </source>
</evidence>
<evidence type="ECO:0000305" key="8"/>
<evidence type="ECO:0000312" key="9">
    <source>
        <dbReference type="EMBL" id="AAC32597.1"/>
    </source>
</evidence>
<evidence type="ECO:0000312" key="10">
    <source>
        <dbReference type="EMBL" id="AYU77538.1"/>
    </source>
</evidence>
<evidence type="ECO:0000312" key="11">
    <source>
        <dbReference type="EMBL" id="CAC5428821.1"/>
    </source>
</evidence>
<evidence type="ECO:0000312" key="12">
    <source>
        <dbReference type="EMBL" id="TPP53190.1"/>
    </source>
</evidence>
<evidence type="ECO:0000312" key="13">
    <source>
        <dbReference type="Proteomes" id="UP000274082"/>
    </source>
</evidence>
<evidence type="ECO:0000312" key="14">
    <source>
        <dbReference type="Proteomes" id="UP000318821"/>
    </source>
</evidence>
<proteinExistence type="evidence at protein level"/>
<accession>O76343</accession>
<keyword id="KW-0325">Glycoprotein</keyword>
<keyword id="KW-0472">Membrane</keyword>
<keyword id="KW-0812">Transmembrane</keyword>
<keyword id="KW-1133">Transmembrane helix</keyword>
<keyword id="KW-0813">Transport</keyword>